<name>RL17_LIMRD</name>
<sequence>MSYRKLGRTSSQRKALLRDLTTDLIVNGRITTTEARAKEVRKTADKMITLAKHGDLASRRKAAAFVRNVVADVKEDGDDIRVQSALQNLFEELAPKYADRNGGYTRILKTMPRRGDGAPMVILELVD</sequence>
<proteinExistence type="inferred from homology"/>
<dbReference type="EMBL" id="CP000705">
    <property type="protein sequence ID" value="ABQ83702.1"/>
    <property type="molecule type" value="Genomic_DNA"/>
</dbReference>
<dbReference type="RefSeq" id="WP_003664528.1">
    <property type="nucleotide sequence ID" value="NZ_AZDD01000010.1"/>
</dbReference>
<dbReference type="SMR" id="A5VLH8"/>
<dbReference type="STRING" id="557436.Lreu_1456"/>
<dbReference type="GeneID" id="77191452"/>
<dbReference type="KEGG" id="lre:Lreu_1456"/>
<dbReference type="PATRIC" id="fig|557436.17.peg.167"/>
<dbReference type="eggNOG" id="COG0203">
    <property type="taxonomic scope" value="Bacteria"/>
</dbReference>
<dbReference type="HOGENOM" id="CLU_074407_2_2_9"/>
<dbReference type="Proteomes" id="UP000001991">
    <property type="component" value="Chromosome"/>
</dbReference>
<dbReference type="GO" id="GO:0022625">
    <property type="term" value="C:cytosolic large ribosomal subunit"/>
    <property type="evidence" value="ECO:0007669"/>
    <property type="project" value="TreeGrafter"/>
</dbReference>
<dbReference type="GO" id="GO:0003735">
    <property type="term" value="F:structural constituent of ribosome"/>
    <property type="evidence" value="ECO:0007669"/>
    <property type="project" value="InterPro"/>
</dbReference>
<dbReference type="GO" id="GO:0006412">
    <property type="term" value="P:translation"/>
    <property type="evidence" value="ECO:0007669"/>
    <property type="project" value="UniProtKB-UniRule"/>
</dbReference>
<dbReference type="FunFam" id="3.90.1030.10:FF:000002">
    <property type="entry name" value="50S ribosomal protein L17"/>
    <property type="match status" value="1"/>
</dbReference>
<dbReference type="Gene3D" id="3.90.1030.10">
    <property type="entry name" value="Ribosomal protein L17"/>
    <property type="match status" value="1"/>
</dbReference>
<dbReference type="HAMAP" id="MF_01368">
    <property type="entry name" value="Ribosomal_bL17"/>
    <property type="match status" value="1"/>
</dbReference>
<dbReference type="InterPro" id="IPR000456">
    <property type="entry name" value="Ribosomal_bL17"/>
</dbReference>
<dbReference type="InterPro" id="IPR047859">
    <property type="entry name" value="Ribosomal_bL17_CS"/>
</dbReference>
<dbReference type="InterPro" id="IPR036373">
    <property type="entry name" value="Ribosomal_bL17_sf"/>
</dbReference>
<dbReference type="NCBIfam" id="TIGR00059">
    <property type="entry name" value="L17"/>
    <property type="match status" value="1"/>
</dbReference>
<dbReference type="PANTHER" id="PTHR14413:SF16">
    <property type="entry name" value="LARGE RIBOSOMAL SUBUNIT PROTEIN BL17M"/>
    <property type="match status" value="1"/>
</dbReference>
<dbReference type="PANTHER" id="PTHR14413">
    <property type="entry name" value="RIBOSOMAL PROTEIN L17"/>
    <property type="match status" value="1"/>
</dbReference>
<dbReference type="Pfam" id="PF01196">
    <property type="entry name" value="Ribosomal_L17"/>
    <property type="match status" value="1"/>
</dbReference>
<dbReference type="SUPFAM" id="SSF64263">
    <property type="entry name" value="Prokaryotic ribosomal protein L17"/>
    <property type="match status" value="1"/>
</dbReference>
<dbReference type="PROSITE" id="PS01167">
    <property type="entry name" value="RIBOSOMAL_L17"/>
    <property type="match status" value="1"/>
</dbReference>
<protein>
    <recommendedName>
        <fullName evidence="1">Large ribosomal subunit protein bL17</fullName>
    </recommendedName>
    <alternativeName>
        <fullName evidence="2">50S ribosomal protein L17</fullName>
    </alternativeName>
</protein>
<keyword id="KW-1185">Reference proteome</keyword>
<keyword id="KW-0687">Ribonucleoprotein</keyword>
<keyword id="KW-0689">Ribosomal protein</keyword>
<gene>
    <name evidence="1" type="primary">rplQ</name>
    <name type="ordered locus">Lreu_1456</name>
</gene>
<accession>A5VLH8</accession>
<comment type="subunit">
    <text evidence="1">Part of the 50S ribosomal subunit. Contacts protein L32.</text>
</comment>
<comment type="similarity">
    <text evidence="1">Belongs to the bacterial ribosomal protein bL17 family.</text>
</comment>
<organism>
    <name type="scientific">Limosilactobacillus reuteri (strain DSM 20016)</name>
    <name type="common">Lactobacillus reuteri</name>
    <dbReference type="NCBI Taxonomy" id="557436"/>
    <lineage>
        <taxon>Bacteria</taxon>
        <taxon>Bacillati</taxon>
        <taxon>Bacillota</taxon>
        <taxon>Bacilli</taxon>
        <taxon>Lactobacillales</taxon>
        <taxon>Lactobacillaceae</taxon>
        <taxon>Limosilactobacillus</taxon>
    </lineage>
</organism>
<reference key="1">
    <citation type="journal article" date="2011" name="PLoS Genet.">
        <title>The evolution of host specialization in the vertebrate gut symbiont Lactobacillus reuteri.</title>
        <authorList>
            <person name="Frese S.A."/>
            <person name="Benson A.K."/>
            <person name="Tannock G.W."/>
            <person name="Loach D.M."/>
            <person name="Kim J."/>
            <person name="Zhang M."/>
            <person name="Oh P.L."/>
            <person name="Heng N.C."/>
            <person name="Patil P.B."/>
            <person name="Juge N."/>
            <person name="Mackenzie D.A."/>
            <person name="Pearson B.M."/>
            <person name="Lapidus A."/>
            <person name="Dalin E."/>
            <person name="Tice H."/>
            <person name="Goltsman E."/>
            <person name="Land M."/>
            <person name="Hauser L."/>
            <person name="Ivanova N."/>
            <person name="Kyrpides N.C."/>
            <person name="Walter J."/>
        </authorList>
    </citation>
    <scope>NUCLEOTIDE SEQUENCE [LARGE SCALE GENOMIC DNA]</scope>
    <source>
        <strain>DSM 20016</strain>
    </source>
</reference>
<evidence type="ECO:0000255" key="1">
    <source>
        <dbReference type="HAMAP-Rule" id="MF_01368"/>
    </source>
</evidence>
<evidence type="ECO:0000305" key="2"/>
<feature type="chain" id="PRO_1000068022" description="Large ribosomal subunit protein bL17">
    <location>
        <begin position="1"/>
        <end position="127"/>
    </location>
</feature>